<proteinExistence type="inferred from homology"/>
<sequence length="448" mass="50040">MTTILKHLPVGQRIGIAFSGGLDTSAALLWMRQKGAVPYAYTANLGQPDEDDYDEIPRRAMEYGAENARLIDCRKQLVAEGIAAIQCGAFHNTTAGVTYFNTTPLGRAVTGTMLVAAMKEDGVNIWGDGSTYKGNDIERFYRYGLLTNAELKIYKPWLDTDFIDELGGRQEMSEFMSQAGFGYKMSAEKAYSTDSNILGATHEAKDLEFLNSSVKIVNPIMGVKFWDENVKVPAEEVTIRFERGHPVALNGKTFTDDIELMLEANRIGGRHGLGMSDQIENRIIEAKSRGIYEAPGMALLHIAYERLLTGIHNEDTIEQYHANGRQLGRFLYQGRWFDSQALMLRDSSQRWIASAITGEVTLELRRGNDYSIMNTVSDNLTYKPERLTMEKGDSVFSPDDRIGQLTMRNLDITDTREKLFNYAETGLLSSSASTGLPQVGQLQDKTEK</sequence>
<feature type="chain" id="PRO_1000025424" description="Argininosuccinate synthase">
    <location>
        <begin position="1"/>
        <end position="448"/>
    </location>
</feature>
<feature type="binding site" evidence="1">
    <location>
        <begin position="17"/>
        <end position="25"/>
    </location>
    <ligand>
        <name>ATP</name>
        <dbReference type="ChEBI" id="CHEBI:30616"/>
    </ligand>
</feature>
<feature type="binding site" evidence="1">
    <location>
        <position position="43"/>
    </location>
    <ligand>
        <name>ATP</name>
        <dbReference type="ChEBI" id="CHEBI:30616"/>
    </ligand>
</feature>
<feature type="binding site" evidence="1">
    <location>
        <position position="99"/>
    </location>
    <ligand>
        <name>L-citrulline</name>
        <dbReference type="ChEBI" id="CHEBI:57743"/>
    </ligand>
</feature>
<feature type="binding site" evidence="1">
    <location>
        <position position="129"/>
    </location>
    <ligand>
        <name>ATP</name>
        <dbReference type="ChEBI" id="CHEBI:30616"/>
    </ligand>
</feature>
<feature type="binding site" evidence="1">
    <location>
        <position position="131"/>
    </location>
    <ligand>
        <name>ATP</name>
        <dbReference type="ChEBI" id="CHEBI:30616"/>
    </ligand>
</feature>
<feature type="binding site" evidence="1">
    <location>
        <position position="131"/>
    </location>
    <ligand>
        <name>L-aspartate</name>
        <dbReference type="ChEBI" id="CHEBI:29991"/>
    </ligand>
</feature>
<feature type="binding site" evidence="1">
    <location>
        <position position="135"/>
    </location>
    <ligand>
        <name>L-aspartate</name>
        <dbReference type="ChEBI" id="CHEBI:29991"/>
    </ligand>
</feature>
<feature type="binding site" evidence="1">
    <location>
        <position position="135"/>
    </location>
    <ligand>
        <name>L-citrulline</name>
        <dbReference type="ChEBI" id="CHEBI:57743"/>
    </ligand>
</feature>
<feature type="binding site" evidence="1">
    <location>
        <position position="136"/>
    </location>
    <ligand>
        <name>ATP</name>
        <dbReference type="ChEBI" id="CHEBI:30616"/>
    </ligand>
</feature>
<feature type="binding site" evidence="1">
    <location>
        <position position="136"/>
    </location>
    <ligand>
        <name>L-aspartate</name>
        <dbReference type="ChEBI" id="CHEBI:29991"/>
    </ligand>
</feature>
<feature type="binding site" evidence="1">
    <location>
        <position position="139"/>
    </location>
    <ligand>
        <name>L-citrulline</name>
        <dbReference type="ChEBI" id="CHEBI:57743"/>
    </ligand>
</feature>
<feature type="binding site" evidence="1">
    <location>
        <position position="192"/>
    </location>
    <ligand>
        <name>L-citrulline</name>
        <dbReference type="ChEBI" id="CHEBI:57743"/>
    </ligand>
</feature>
<feature type="binding site" evidence="1">
    <location>
        <position position="194"/>
    </location>
    <ligand>
        <name>ATP</name>
        <dbReference type="ChEBI" id="CHEBI:30616"/>
    </ligand>
</feature>
<feature type="binding site" evidence="1">
    <location>
        <position position="201"/>
    </location>
    <ligand>
        <name>L-citrulline</name>
        <dbReference type="ChEBI" id="CHEBI:57743"/>
    </ligand>
</feature>
<feature type="binding site" evidence="1">
    <location>
        <position position="203"/>
    </location>
    <ligand>
        <name>L-citrulline</name>
        <dbReference type="ChEBI" id="CHEBI:57743"/>
    </ligand>
</feature>
<feature type="binding site" evidence="1">
    <location>
        <position position="280"/>
    </location>
    <ligand>
        <name>L-citrulline</name>
        <dbReference type="ChEBI" id="CHEBI:57743"/>
    </ligand>
</feature>
<name>ASSY_PECAS</name>
<accession>Q6DAZ8</accession>
<dbReference type="EC" id="6.3.4.5" evidence="1"/>
<dbReference type="EMBL" id="BX950851">
    <property type="protein sequence ID" value="CAG73024.1"/>
    <property type="molecule type" value="Genomic_DNA"/>
</dbReference>
<dbReference type="RefSeq" id="WP_011091747.1">
    <property type="nucleotide sequence ID" value="NC_004547.2"/>
</dbReference>
<dbReference type="SMR" id="Q6DAZ8"/>
<dbReference type="STRING" id="218491.ECA0104"/>
<dbReference type="GeneID" id="57206959"/>
<dbReference type="KEGG" id="eca:ECA0104"/>
<dbReference type="PATRIC" id="fig|218491.5.peg.106"/>
<dbReference type="eggNOG" id="COG0137">
    <property type="taxonomic scope" value="Bacteria"/>
</dbReference>
<dbReference type="HOGENOM" id="CLU_032784_4_1_6"/>
<dbReference type="OrthoDB" id="9801641at2"/>
<dbReference type="UniPathway" id="UPA00068">
    <property type="reaction ID" value="UER00113"/>
</dbReference>
<dbReference type="Proteomes" id="UP000007966">
    <property type="component" value="Chromosome"/>
</dbReference>
<dbReference type="GO" id="GO:0005737">
    <property type="term" value="C:cytoplasm"/>
    <property type="evidence" value="ECO:0007669"/>
    <property type="project" value="UniProtKB-SubCell"/>
</dbReference>
<dbReference type="GO" id="GO:0004055">
    <property type="term" value="F:argininosuccinate synthase activity"/>
    <property type="evidence" value="ECO:0007669"/>
    <property type="project" value="UniProtKB-UniRule"/>
</dbReference>
<dbReference type="GO" id="GO:0005524">
    <property type="term" value="F:ATP binding"/>
    <property type="evidence" value="ECO:0007669"/>
    <property type="project" value="UniProtKB-UniRule"/>
</dbReference>
<dbReference type="GO" id="GO:0042803">
    <property type="term" value="F:protein homodimerization activity"/>
    <property type="evidence" value="ECO:0007669"/>
    <property type="project" value="InterPro"/>
</dbReference>
<dbReference type="GO" id="GO:0000053">
    <property type="term" value="P:argininosuccinate metabolic process"/>
    <property type="evidence" value="ECO:0007669"/>
    <property type="project" value="TreeGrafter"/>
</dbReference>
<dbReference type="GO" id="GO:0006526">
    <property type="term" value="P:L-arginine biosynthetic process"/>
    <property type="evidence" value="ECO:0007669"/>
    <property type="project" value="UniProtKB-UniRule"/>
</dbReference>
<dbReference type="GO" id="GO:0000050">
    <property type="term" value="P:urea cycle"/>
    <property type="evidence" value="ECO:0007669"/>
    <property type="project" value="TreeGrafter"/>
</dbReference>
<dbReference type="CDD" id="cd01999">
    <property type="entry name" value="ASS"/>
    <property type="match status" value="1"/>
</dbReference>
<dbReference type="FunFam" id="1.10.287.400:FF:000001">
    <property type="entry name" value="Argininosuccinate synthase"/>
    <property type="match status" value="1"/>
</dbReference>
<dbReference type="Gene3D" id="1.10.287.400">
    <property type="match status" value="1"/>
</dbReference>
<dbReference type="Gene3D" id="3.90.1260.10">
    <property type="entry name" value="Argininosuccinate synthetase, chain A, domain 2"/>
    <property type="match status" value="1"/>
</dbReference>
<dbReference type="Gene3D" id="3.40.50.620">
    <property type="entry name" value="HUPs"/>
    <property type="match status" value="1"/>
</dbReference>
<dbReference type="HAMAP" id="MF_00581">
    <property type="entry name" value="Arg_succ_synth_type2"/>
    <property type="match status" value="1"/>
</dbReference>
<dbReference type="InterPro" id="IPR023437">
    <property type="entry name" value="Arg_succ_synth_type2_subfam"/>
</dbReference>
<dbReference type="InterPro" id="IPR048268">
    <property type="entry name" value="Arginosuc_syn_C"/>
</dbReference>
<dbReference type="InterPro" id="IPR048267">
    <property type="entry name" value="Arginosuc_syn_N"/>
</dbReference>
<dbReference type="InterPro" id="IPR001518">
    <property type="entry name" value="Arginosuc_synth"/>
</dbReference>
<dbReference type="InterPro" id="IPR018223">
    <property type="entry name" value="Arginosuc_synth_CS"/>
</dbReference>
<dbReference type="InterPro" id="IPR023434">
    <property type="entry name" value="Arginosuc_synth_type_1_subfam"/>
</dbReference>
<dbReference type="InterPro" id="IPR024074">
    <property type="entry name" value="AS_cat/multimer_dom_body"/>
</dbReference>
<dbReference type="InterPro" id="IPR024073">
    <property type="entry name" value="AS_multimer_C_tail"/>
</dbReference>
<dbReference type="InterPro" id="IPR014729">
    <property type="entry name" value="Rossmann-like_a/b/a_fold"/>
</dbReference>
<dbReference type="NCBIfam" id="TIGR00032">
    <property type="entry name" value="argG"/>
    <property type="match status" value="1"/>
</dbReference>
<dbReference type="NCBIfam" id="NF003779">
    <property type="entry name" value="PRK05370.1"/>
    <property type="match status" value="1"/>
</dbReference>
<dbReference type="PANTHER" id="PTHR11587">
    <property type="entry name" value="ARGININOSUCCINATE SYNTHASE"/>
    <property type="match status" value="1"/>
</dbReference>
<dbReference type="PANTHER" id="PTHR11587:SF2">
    <property type="entry name" value="ARGININOSUCCINATE SYNTHASE"/>
    <property type="match status" value="1"/>
</dbReference>
<dbReference type="Pfam" id="PF20979">
    <property type="entry name" value="Arginosuc_syn_C"/>
    <property type="match status" value="1"/>
</dbReference>
<dbReference type="Pfam" id="PF00764">
    <property type="entry name" value="Arginosuc_synth"/>
    <property type="match status" value="1"/>
</dbReference>
<dbReference type="SUPFAM" id="SSF52402">
    <property type="entry name" value="Adenine nucleotide alpha hydrolases-like"/>
    <property type="match status" value="1"/>
</dbReference>
<dbReference type="SUPFAM" id="SSF69864">
    <property type="entry name" value="Argininosuccinate synthetase, C-terminal domain"/>
    <property type="match status" value="1"/>
</dbReference>
<dbReference type="PROSITE" id="PS00564">
    <property type="entry name" value="ARGININOSUCCIN_SYN_1"/>
    <property type="match status" value="1"/>
</dbReference>
<dbReference type="PROSITE" id="PS00565">
    <property type="entry name" value="ARGININOSUCCIN_SYN_2"/>
    <property type="match status" value="1"/>
</dbReference>
<evidence type="ECO:0000255" key="1">
    <source>
        <dbReference type="HAMAP-Rule" id="MF_00581"/>
    </source>
</evidence>
<protein>
    <recommendedName>
        <fullName evidence="1">Argininosuccinate synthase</fullName>
        <ecNumber evidence="1">6.3.4.5</ecNumber>
    </recommendedName>
    <alternativeName>
        <fullName evidence="1">Citrulline--aspartate ligase</fullName>
    </alternativeName>
</protein>
<keyword id="KW-0028">Amino-acid biosynthesis</keyword>
<keyword id="KW-0055">Arginine biosynthesis</keyword>
<keyword id="KW-0067">ATP-binding</keyword>
<keyword id="KW-0963">Cytoplasm</keyword>
<keyword id="KW-0436">Ligase</keyword>
<keyword id="KW-0547">Nucleotide-binding</keyword>
<keyword id="KW-1185">Reference proteome</keyword>
<reference key="1">
    <citation type="journal article" date="2004" name="Proc. Natl. Acad. Sci. U.S.A.">
        <title>Genome sequence of the enterobacterial phytopathogen Erwinia carotovora subsp. atroseptica and characterization of virulence factors.</title>
        <authorList>
            <person name="Bell K.S."/>
            <person name="Sebaihia M."/>
            <person name="Pritchard L."/>
            <person name="Holden M.T.G."/>
            <person name="Hyman L.J."/>
            <person name="Holeva M.C."/>
            <person name="Thomson N.R."/>
            <person name="Bentley S.D."/>
            <person name="Churcher L.J.C."/>
            <person name="Mungall K."/>
            <person name="Atkin R."/>
            <person name="Bason N."/>
            <person name="Brooks K."/>
            <person name="Chillingworth T."/>
            <person name="Clark K."/>
            <person name="Doggett J."/>
            <person name="Fraser A."/>
            <person name="Hance Z."/>
            <person name="Hauser H."/>
            <person name="Jagels K."/>
            <person name="Moule S."/>
            <person name="Norbertczak H."/>
            <person name="Ormond D."/>
            <person name="Price C."/>
            <person name="Quail M.A."/>
            <person name="Sanders M."/>
            <person name="Walker D."/>
            <person name="Whitehead S."/>
            <person name="Salmond G.P.C."/>
            <person name="Birch P.R.J."/>
            <person name="Parkhill J."/>
            <person name="Toth I.K."/>
        </authorList>
    </citation>
    <scope>NUCLEOTIDE SEQUENCE [LARGE SCALE GENOMIC DNA]</scope>
    <source>
        <strain>SCRI 1043 / ATCC BAA-672</strain>
    </source>
</reference>
<comment type="catalytic activity">
    <reaction evidence="1">
        <text>L-citrulline + L-aspartate + ATP = 2-(N(omega)-L-arginino)succinate + AMP + diphosphate + H(+)</text>
        <dbReference type="Rhea" id="RHEA:10932"/>
        <dbReference type="ChEBI" id="CHEBI:15378"/>
        <dbReference type="ChEBI" id="CHEBI:29991"/>
        <dbReference type="ChEBI" id="CHEBI:30616"/>
        <dbReference type="ChEBI" id="CHEBI:33019"/>
        <dbReference type="ChEBI" id="CHEBI:57472"/>
        <dbReference type="ChEBI" id="CHEBI:57743"/>
        <dbReference type="ChEBI" id="CHEBI:456215"/>
        <dbReference type="EC" id="6.3.4.5"/>
    </reaction>
</comment>
<comment type="pathway">
    <text evidence="1">Amino-acid biosynthesis; L-arginine biosynthesis; L-arginine from L-ornithine and carbamoyl phosphate: step 2/3.</text>
</comment>
<comment type="subunit">
    <text evidence="1">Homotetramer.</text>
</comment>
<comment type="subcellular location">
    <subcellularLocation>
        <location evidence="1">Cytoplasm</location>
    </subcellularLocation>
</comment>
<comment type="similarity">
    <text evidence="1">Belongs to the argininosuccinate synthase family. Type 2 subfamily.</text>
</comment>
<gene>
    <name evidence="1" type="primary">argG</name>
    <name type="ordered locus">ECA0104</name>
</gene>
<organism>
    <name type="scientific">Pectobacterium atrosepticum (strain SCRI 1043 / ATCC BAA-672)</name>
    <name type="common">Erwinia carotovora subsp. atroseptica</name>
    <dbReference type="NCBI Taxonomy" id="218491"/>
    <lineage>
        <taxon>Bacteria</taxon>
        <taxon>Pseudomonadati</taxon>
        <taxon>Pseudomonadota</taxon>
        <taxon>Gammaproteobacteria</taxon>
        <taxon>Enterobacterales</taxon>
        <taxon>Pectobacteriaceae</taxon>
        <taxon>Pectobacterium</taxon>
    </lineage>
</organism>